<feature type="chain" id="PRO_0000348746" description="tRNA-cytidine(32) 2-sulfurtransferase">
    <location>
        <begin position="1"/>
        <end position="252"/>
    </location>
</feature>
<feature type="short sequence motif" description="PP-loop motif" evidence="1">
    <location>
        <begin position="37"/>
        <end position="42"/>
    </location>
</feature>
<feature type="binding site" evidence="1">
    <location>
        <position position="112"/>
    </location>
    <ligand>
        <name>[4Fe-4S] cluster</name>
        <dbReference type="ChEBI" id="CHEBI:49883"/>
    </ligand>
</feature>
<feature type="binding site" evidence="1">
    <location>
        <position position="115"/>
    </location>
    <ligand>
        <name>[4Fe-4S] cluster</name>
        <dbReference type="ChEBI" id="CHEBI:49883"/>
    </ligand>
</feature>
<feature type="binding site" evidence="1">
    <location>
        <position position="202"/>
    </location>
    <ligand>
        <name>[4Fe-4S] cluster</name>
        <dbReference type="ChEBI" id="CHEBI:49883"/>
    </ligand>
</feature>
<sequence>MALIEDRLFTRIKNRVGRAIADYNLIEEGDRIAVAVSGGKDSYTLLHILETLRKRAPVRYEIMAINIDSGYPGFRADIIEEHLREHGFVAHMEKTDHYGIIKEKRRPDSSYCSICARLKRGVLYGLAQRYNCNKLALGHHMDDFIETLLLNQFFVGSLKAMAPSMLADNGLTTVIRPLVYVPEEDIIPFSRNNRFPVLCCCCPVCGSADQQRKRMKELLKTLEKENPFVKKSLLKALANVQPRYLLDRRVKY</sequence>
<name>TTCA_GEOUR</name>
<proteinExistence type="inferred from homology"/>
<protein>
    <recommendedName>
        <fullName evidence="1">tRNA-cytidine(32) 2-sulfurtransferase</fullName>
        <ecNumber evidence="1">2.8.1.-</ecNumber>
    </recommendedName>
    <alternativeName>
        <fullName evidence="1">Two-thiocytidine biosynthesis protein A</fullName>
    </alternativeName>
    <alternativeName>
        <fullName evidence="1">tRNA 2-thiocytidine biosynthesis protein TtcA</fullName>
    </alternativeName>
</protein>
<gene>
    <name evidence="1" type="primary">ttcA</name>
    <name type="ordered locus">Gura_0711</name>
</gene>
<reference key="1">
    <citation type="submission" date="2007-05" db="EMBL/GenBank/DDBJ databases">
        <title>Complete sequence of Geobacter uraniireducens Rf4.</title>
        <authorList>
            <consortium name="US DOE Joint Genome Institute"/>
            <person name="Copeland A."/>
            <person name="Lucas S."/>
            <person name="Lapidus A."/>
            <person name="Barry K."/>
            <person name="Detter J.C."/>
            <person name="Glavina del Rio T."/>
            <person name="Hammon N."/>
            <person name="Israni S."/>
            <person name="Dalin E."/>
            <person name="Tice H."/>
            <person name="Pitluck S."/>
            <person name="Chertkov O."/>
            <person name="Brettin T."/>
            <person name="Bruce D."/>
            <person name="Han C."/>
            <person name="Schmutz J."/>
            <person name="Larimer F."/>
            <person name="Land M."/>
            <person name="Hauser L."/>
            <person name="Kyrpides N."/>
            <person name="Mikhailova N."/>
            <person name="Shelobolina E."/>
            <person name="Aklujkar M."/>
            <person name="Lovley D."/>
            <person name="Richardson P."/>
        </authorList>
    </citation>
    <scope>NUCLEOTIDE SEQUENCE [LARGE SCALE GENOMIC DNA]</scope>
    <source>
        <strain>ATCC BAA-1134 / JCM 13001 / Rf4</strain>
    </source>
</reference>
<accession>A5GBX4</accession>
<dbReference type="EC" id="2.8.1.-" evidence="1"/>
<dbReference type="EMBL" id="CP000698">
    <property type="protein sequence ID" value="ABQ24921.1"/>
    <property type="molecule type" value="Genomic_DNA"/>
</dbReference>
<dbReference type="RefSeq" id="WP_011937645.1">
    <property type="nucleotide sequence ID" value="NC_009483.1"/>
</dbReference>
<dbReference type="SMR" id="A5GBX4"/>
<dbReference type="STRING" id="351605.Gura_0711"/>
<dbReference type="KEGG" id="gur:Gura_0711"/>
<dbReference type="HOGENOM" id="CLU_026481_0_0_7"/>
<dbReference type="OrthoDB" id="9801054at2"/>
<dbReference type="Proteomes" id="UP000006695">
    <property type="component" value="Chromosome"/>
</dbReference>
<dbReference type="GO" id="GO:0005737">
    <property type="term" value="C:cytoplasm"/>
    <property type="evidence" value="ECO:0007669"/>
    <property type="project" value="UniProtKB-SubCell"/>
</dbReference>
<dbReference type="GO" id="GO:0051539">
    <property type="term" value="F:4 iron, 4 sulfur cluster binding"/>
    <property type="evidence" value="ECO:0007669"/>
    <property type="project" value="UniProtKB-KW"/>
</dbReference>
<dbReference type="GO" id="GO:0005524">
    <property type="term" value="F:ATP binding"/>
    <property type="evidence" value="ECO:0007669"/>
    <property type="project" value="UniProtKB-KW"/>
</dbReference>
<dbReference type="GO" id="GO:0046872">
    <property type="term" value="F:metal ion binding"/>
    <property type="evidence" value="ECO:0007669"/>
    <property type="project" value="UniProtKB-KW"/>
</dbReference>
<dbReference type="GO" id="GO:0016740">
    <property type="term" value="F:transferase activity"/>
    <property type="evidence" value="ECO:0007669"/>
    <property type="project" value="UniProtKB-KW"/>
</dbReference>
<dbReference type="GO" id="GO:0000049">
    <property type="term" value="F:tRNA binding"/>
    <property type="evidence" value="ECO:0007669"/>
    <property type="project" value="UniProtKB-KW"/>
</dbReference>
<dbReference type="GO" id="GO:0006400">
    <property type="term" value="P:tRNA modification"/>
    <property type="evidence" value="ECO:0007669"/>
    <property type="project" value="UniProtKB-ARBA"/>
</dbReference>
<dbReference type="CDD" id="cd24138">
    <property type="entry name" value="TtcA-like"/>
    <property type="match status" value="1"/>
</dbReference>
<dbReference type="Gene3D" id="3.40.50.620">
    <property type="entry name" value="HUPs"/>
    <property type="match status" value="1"/>
</dbReference>
<dbReference type="HAMAP" id="MF_01850">
    <property type="entry name" value="TtcA"/>
    <property type="match status" value="1"/>
</dbReference>
<dbReference type="InterPro" id="IPR014729">
    <property type="entry name" value="Rossmann-like_a/b/a_fold"/>
</dbReference>
<dbReference type="InterPro" id="IPR011063">
    <property type="entry name" value="TilS/TtcA_N"/>
</dbReference>
<dbReference type="InterPro" id="IPR012089">
    <property type="entry name" value="tRNA_Cyd_32_2_STrfase"/>
</dbReference>
<dbReference type="InterPro" id="IPR035107">
    <property type="entry name" value="tRNA_thiolation_TtcA_Ctu1"/>
</dbReference>
<dbReference type="NCBIfam" id="NF007972">
    <property type="entry name" value="PRK10696.1"/>
    <property type="match status" value="1"/>
</dbReference>
<dbReference type="PANTHER" id="PTHR43686:SF1">
    <property type="entry name" value="AMINOTRAN_5 DOMAIN-CONTAINING PROTEIN"/>
    <property type="match status" value="1"/>
</dbReference>
<dbReference type="PANTHER" id="PTHR43686">
    <property type="entry name" value="SULFURTRANSFERASE-RELATED"/>
    <property type="match status" value="1"/>
</dbReference>
<dbReference type="Pfam" id="PF01171">
    <property type="entry name" value="ATP_bind_3"/>
    <property type="match status" value="1"/>
</dbReference>
<dbReference type="PIRSF" id="PIRSF004976">
    <property type="entry name" value="ATPase_YdaO"/>
    <property type="match status" value="1"/>
</dbReference>
<dbReference type="SUPFAM" id="SSF52402">
    <property type="entry name" value="Adenine nucleotide alpha hydrolases-like"/>
    <property type="match status" value="1"/>
</dbReference>
<organism>
    <name type="scientific">Geotalea uraniireducens (strain Rf4)</name>
    <name type="common">Geobacter uraniireducens</name>
    <dbReference type="NCBI Taxonomy" id="351605"/>
    <lineage>
        <taxon>Bacteria</taxon>
        <taxon>Pseudomonadati</taxon>
        <taxon>Thermodesulfobacteriota</taxon>
        <taxon>Desulfuromonadia</taxon>
        <taxon>Geobacterales</taxon>
        <taxon>Geobacteraceae</taxon>
        <taxon>Geotalea</taxon>
    </lineage>
</organism>
<comment type="function">
    <text evidence="1">Catalyzes the ATP-dependent 2-thiolation of cytidine in position 32 of tRNA, to form 2-thiocytidine (s(2)C32). The sulfur atoms are provided by the cysteine/cysteine desulfurase (IscS) system.</text>
</comment>
<comment type="catalytic activity">
    <reaction evidence="1">
        <text>cytidine(32) in tRNA + S-sulfanyl-L-cysteinyl-[cysteine desulfurase] + AH2 + ATP = 2-thiocytidine(32) in tRNA + L-cysteinyl-[cysteine desulfurase] + A + AMP + diphosphate + H(+)</text>
        <dbReference type="Rhea" id="RHEA:57048"/>
        <dbReference type="Rhea" id="RHEA-COMP:10288"/>
        <dbReference type="Rhea" id="RHEA-COMP:12157"/>
        <dbReference type="Rhea" id="RHEA-COMP:12158"/>
        <dbReference type="Rhea" id="RHEA-COMP:14821"/>
        <dbReference type="ChEBI" id="CHEBI:13193"/>
        <dbReference type="ChEBI" id="CHEBI:15378"/>
        <dbReference type="ChEBI" id="CHEBI:17499"/>
        <dbReference type="ChEBI" id="CHEBI:29950"/>
        <dbReference type="ChEBI" id="CHEBI:30616"/>
        <dbReference type="ChEBI" id="CHEBI:33019"/>
        <dbReference type="ChEBI" id="CHEBI:61963"/>
        <dbReference type="ChEBI" id="CHEBI:82748"/>
        <dbReference type="ChEBI" id="CHEBI:141453"/>
        <dbReference type="ChEBI" id="CHEBI:456215"/>
    </reaction>
    <physiologicalReaction direction="left-to-right" evidence="1">
        <dbReference type="Rhea" id="RHEA:57049"/>
    </physiologicalReaction>
</comment>
<comment type="cofactor">
    <cofactor evidence="1">
        <name>Mg(2+)</name>
        <dbReference type="ChEBI" id="CHEBI:18420"/>
    </cofactor>
</comment>
<comment type="cofactor">
    <cofactor evidence="1">
        <name>[4Fe-4S] cluster</name>
        <dbReference type="ChEBI" id="CHEBI:49883"/>
    </cofactor>
    <text evidence="1">Binds 1 [4Fe-4S] cluster per subunit. The cluster is chelated by three Cys residues, the fourth Fe has a free coordination site that may bind a sulfur atom transferred from the persulfide of IscS.</text>
</comment>
<comment type="pathway">
    <text evidence="1">tRNA modification.</text>
</comment>
<comment type="subunit">
    <text evidence="1">Homodimer.</text>
</comment>
<comment type="subcellular location">
    <subcellularLocation>
        <location evidence="1">Cytoplasm</location>
    </subcellularLocation>
</comment>
<comment type="miscellaneous">
    <text evidence="1">The thiolation reaction likely consists of two steps: a first activation step by ATP to form an adenylated intermediate of the target base of tRNA, and a second nucleophilic substitution step of the sulfur (S) atom supplied by the hydrosulfide attached to the Fe-S cluster.</text>
</comment>
<comment type="similarity">
    <text evidence="1">Belongs to the TtcA family.</text>
</comment>
<evidence type="ECO:0000255" key="1">
    <source>
        <dbReference type="HAMAP-Rule" id="MF_01850"/>
    </source>
</evidence>
<keyword id="KW-0004">4Fe-4S</keyword>
<keyword id="KW-0067">ATP-binding</keyword>
<keyword id="KW-0963">Cytoplasm</keyword>
<keyword id="KW-0408">Iron</keyword>
<keyword id="KW-0411">Iron-sulfur</keyword>
<keyword id="KW-0460">Magnesium</keyword>
<keyword id="KW-0479">Metal-binding</keyword>
<keyword id="KW-0547">Nucleotide-binding</keyword>
<keyword id="KW-1185">Reference proteome</keyword>
<keyword id="KW-0694">RNA-binding</keyword>
<keyword id="KW-0808">Transferase</keyword>
<keyword id="KW-0819">tRNA processing</keyword>
<keyword id="KW-0820">tRNA-binding</keyword>